<comment type="function">
    <text evidence="2">Component of the ubiquinol-cytochrome c reductase complex (complex III or cytochrome b-c1 complex) that is part of the mitochondrial respiratory chain. The b-c1 complex mediates electron transfer from ubiquinol to cytochrome c. Contributes to the generation of a proton gradient across the mitochondrial membrane that is then used for ATP synthesis.</text>
</comment>
<comment type="cofactor">
    <cofactor evidence="2">
        <name>heme b</name>
        <dbReference type="ChEBI" id="CHEBI:60344"/>
    </cofactor>
    <text evidence="2">Binds 2 heme b groups non-covalently.</text>
</comment>
<comment type="subunit">
    <text evidence="2">The cytochrome bc1 complex contains 11 subunits: 3 respiratory subunits (MT-CYB, CYC1 and UQCRFS1), 2 core proteins (UQCRC1 and UQCRC2) and 6 low-molecular weight proteins (UQCRH/QCR6, UQCRB/QCR7, UQCRQ/QCR8, UQCR10/QCR9, UQCR11/QCR10 and a cleavage product of UQCRFS1). This cytochrome bc1 complex then forms a dimer.</text>
</comment>
<comment type="subcellular location">
    <subcellularLocation>
        <location evidence="2">Mitochondrion inner membrane</location>
        <topology evidence="2">Multi-pass membrane protein</topology>
    </subcellularLocation>
</comment>
<comment type="miscellaneous">
    <text evidence="1">Heme 1 (or BL or b562) is low-potential and absorbs at about 562 nm, and heme 2 (or BH or b566) is high-potential and absorbs at about 566 nm.</text>
</comment>
<comment type="similarity">
    <text evidence="3">Belongs to the cytochrome b family.</text>
</comment>
<comment type="caution">
    <text evidence="2">The full-length protein contains only eight transmembrane helices, not nine as predicted by bioinformatics tools.</text>
</comment>
<keyword id="KW-0249">Electron transport</keyword>
<keyword id="KW-0349">Heme</keyword>
<keyword id="KW-0408">Iron</keyword>
<keyword id="KW-0472">Membrane</keyword>
<keyword id="KW-0479">Metal-binding</keyword>
<keyword id="KW-0496">Mitochondrion</keyword>
<keyword id="KW-0999">Mitochondrion inner membrane</keyword>
<keyword id="KW-0679">Respiratory chain</keyword>
<keyword id="KW-0812">Transmembrane</keyword>
<keyword id="KW-1133">Transmembrane helix</keyword>
<keyword id="KW-0813">Transport</keyword>
<keyword id="KW-0830">Ubiquinone</keyword>
<sequence length="176" mass="19583">MTNIRKSHPLIKIVNDAFIDLPAPSNISSWWNFGSLLGICLAVQILTGLFLAMHYTSDTATAFNSVTHICRDVNYGWLLRYLHANGASMFFICLYLHIGRGLYYGSYTYTETWNVGVILLFAVMATAFMGYVLPWGQMSSWGATVITNLLSAIPYMGTDLVGWIWGGFSVDKATLT</sequence>
<accession>Q34462</accession>
<name>CYB_EUMGL</name>
<reference key="1">
    <citation type="journal article" date="1994" name="J. Mammal.">
        <title>Familial affinity of Tomopeas ravus (Chiroptera) based on protein electrophoretic and cytochrome b sequence data.</title>
        <authorList>
            <person name="Sudman P.D."/>
            <person name="Barkley L.J."/>
            <person name="Hafner M.S."/>
        </authorList>
    </citation>
    <scope>NUCLEOTIDE SEQUENCE [GENOMIC DNA]</scope>
    <source>
        <strain>Isolate LSUMZ 27212</strain>
        <tissue>Kidney</tissue>
        <tissue>Liver</tissue>
    </source>
</reference>
<gene>
    <name type="primary">MT-CYB</name>
    <name type="synonym">COB</name>
    <name type="synonym">CYTB</name>
    <name type="synonym">MTCYB</name>
</gene>
<organism>
    <name type="scientific">Eumops glaucinus</name>
    <name type="common">Wagner's mastiff bat</name>
    <name type="synonym">Wagner's bonneted bat</name>
    <dbReference type="NCBI Taxonomy" id="27619"/>
    <lineage>
        <taxon>Eukaryota</taxon>
        <taxon>Metazoa</taxon>
        <taxon>Chordata</taxon>
        <taxon>Craniata</taxon>
        <taxon>Vertebrata</taxon>
        <taxon>Euteleostomi</taxon>
        <taxon>Mammalia</taxon>
        <taxon>Eutheria</taxon>
        <taxon>Laurasiatheria</taxon>
        <taxon>Chiroptera</taxon>
        <taxon>Yangochiroptera</taxon>
        <taxon>Molossidae</taxon>
        <taxon>Eumops</taxon>
    </lineage>
</organism>
<protein>
    <recommendedName>
        <fullName>Cytochrome b</fullName>
    </recommendedName>
    <alternativeName>
        <fullName>Complex III subunit 3</fullName>
    </alternativeName>
    <alternativeName>
        <fullName>Complex III subunit III</fullName>
    </alternativeName>
    <alternativeName>
        <fullName>Cytochrome b-c1 complex subunit 3</fullName>
    </alternativeName>
    <alternativeName>
        <fullName>Ubiquinol-cytochrome-c reductase complex cytochrome b subunit</fullName>
    </alternativeName>
</protein>
<proteinExistence type="inferred from homology"/>
<evidence type="ECO:0000250" key="1"/>
<evidence type="ECO:0000250" key="2">
    <source>
        <dbReference type="UniProtKB" id="P00157"/>
    </source>
</evidence>
<evidence type="ECO:0000255" key="3">
    <source>
        <dbReference type="PROSITE-ProRule" id="PRU00968"/>
    </source>
</evidence>
<feature type="chain" id="PRO_0000060959" description="Cytochrome b">
    <location>
        <begin position="1"/>
        <end position="176" status="greater than"/>
    </location>
</feature>
<feature type="transmembrane region" description="Helical" evidence="2">
    <location>
        <begin position="33"/>
        <end position="53"/>
    </location>
</feature>
<feature type="transmembrane region" description="Helical" evidence="2">
    <location>
        <begin position="77"/>
        <end position="98"/>
    </location>
</feature>
<feature type="transmembrane region" description="Helical" evidence="2">
    <location>
        <begin position="113"/>
        <end position="133"/>
    </location>
</feature>
<feature type="binding site" description="axial binding residue" evidence="2">
    <location>
        <position position="83"/>
    </location>
    <ligand>
        <name>heme b</name>
        <dbReference type="ChEBI" id="CHEBI:60344"/>
        <label>b562</label>
    </ligand>
    <ligandPart>
        <name>Fe</name>
        <dbReference type="ChEBI" id="CHEBI:18248"/>
    </ligandPart>
</feature>
<feature type="binding site" description="axial binding residue" evidence="2">
    <location>
        <position position="97"/>
    </location>
    <ligand>
        <name>heme b</name>
        <dbReference type="ChEBI" id="CHEBI:60344"/>
        <label>b566</label>
    </ligand>
    <ligandPart>
        <name>Fe</name>
        <dbReference type="ChEBI" id="CHEBI:18248"/>
    </ligandPart>
</feature>
<feature type="non-terminal residue">
    <location>
        <position position="176"/>
    </location>
</feature>
<dbReference type="EMBL" id="L19719">
    <property type="protein sequence ID" value="AAA17765.1"/>
    <property type="molecule type" value="Genomic_DNA"/>
</dbReference>
<dbReference type="SMR" id="Q34462"/>
<dbReference type="GO" id="GO:0005743">
    <property type="term" value="C:mitochondrial inner membrane"/>
    <property type="evidence" value="ECO:0007669"/>
    <property type="project" value="UniProtKB-SubCell"/>
</dbReference>
<dbReference type="GO" id="GO:0046872">
    <property type="term" value="F:metal ion binding"/>
    <property type="evidence" value="ECO:0007669"/>
    <property type="project" value="UniProtKB-KW"/>
</dbReference>
<dbReference type="GO" id="GO:0008121">
    <property type="term" value="F:ubiquinol-cytochrome-c reductase activity"/>
    <property type="evidence" value="ECO:0007669"/>
    <property type="project" value="TreeGrafter"/>
</dbReference>
<dbReference type="GO" id="GO:0006122">
    <property type="term" value="P:mitochondrial electron transport, ubiquinol to cytochrome c"/>
    <property type="evidence" value="ECO:0007669"/>
    <property type="project" value="TreeGrafter"/>
</dbReference>
<dbReference type="CDD" id="cd00284">
    <property type="entry name" value="Cytochrome_b_N"/>
    <property type="match status" value="1"/>
</dbReference>
<dbReference type="Gene3D" id="1.20.810.10">
    <property type="entry name" value="Cytochrome Bc1 Complex, Chain C"/>
    <property type="match status" value="1"/>
</dbReference>
<dbReference type="InterPro" id="IPR005797">
    <property type="entry name" value="Cyt_b/b6_N"/>
</dbReference>
<dbReference type="InterPro" id="IPR027387">
    <property type="entry name" value="Cytb/b6-like_sf"/>
</dbReference>
<dbReference type="InterPro" id="IPR048259">
    <property type="entry name" value="Cytochrome_b_N_euk/bac"/>
</dbReference>
<dbReference type="InterPro" id="IPR016174">
    <property type="entry name" value="Di-haem_cyt_TM"/>
</dbReference>
<dbReference type="PANTHER" id="PTHR19271">
    <property type="entry name" value="CYTOCHROME B"/>
    <property type="match status" value="1"/>
</dbReference>
<dbReference type="PANTHER" id="PTHR19271:SF16">
    <property type="entry name" value="CYTOCHROME B"/>
    <property type="match status" value="1"/>
</dbReference>
<dbReference type="Pfam" id="PF00033">
    <property type="entry name" value="Cytochrome_B"/>
    <property type="match status" value="1"/>
</dbReference>
<dbReference type="SUPFAM" id="SSF81342">
    <property type="entry name" value="Transmembrane di-heme cytochromes"/>
    <property type="match status" value="1"/>
</dbReference>
<dbReference type="PROSITE" id="PS51002">
    <property type="entry name" value="CYTB_NTER"/>
    <property type="match status" value="1"/>
</dbReference>
<geneLocation type="mitochondrion"/>